<sequence length="454" mass="49231">MSDNDTIVAQATPPGRGGVGILRISGFKAREVAETVLGKLPKPRYADYLPFKDADGSVLDQGIALWFPGPNSFTGEDVLELQGHGGPVILDLLLKRILTIPGLRIARPGEFSERAFLNDKLDLAQAEAIADLIDASSEQAARSALNSLQGAFSARVNHLVEALTHLRIYVEAAIDFPDEEIDFLSDGKIEAQLNDVIADLDAVRAEARQGSLLREGMKVVIAGRPNAGKSSLLNALAGREAAIVTDIAGTTRDVLREHIHIDGMPLHIIDTAGLREASDEVERIGIERAWQEIEQADRVLFMVDGTTTDAVDPAEIWPEFIARLPAKLPITVVRNKADITGETLGMSEVNGHALIRLSARTGEGVDVLRNHLKQSMGFDTNMEGGFLARRRHLQALEQAAEHLQQGKAQLLGAWAGELLAEELRLAQQNLSEITGEFTSDDLLGRIFSSFCIGK</sequence>
<gene>
    <name evidence="1" type="primary">mnmE</name>
    <name evidence="1" type="synonym">trmE</name>
    <name type="ordered locus">EcolC_4288</name>
</gene>
<feature type="chain" id="PRO_1000080008" description="tRNA modification GTPase MnmE">
    <location>
        <begin position="1"/>
        <end position="454"/>
    </location>
</feature>
<feature type="domain" description="TrmE-type G">
    <location>
        <begin position="216"/>
        <end position="377"/>
    </location>
</feature>
<feature type="binding site" evidence="1">
    <location>
        <position position="23"/>
    </location>
    <ligand>
        <name>(6S)-5-formyl-5,6,7,8-tetrahydrofolate</name>
        <dbReference type="ChEBI" id="CHEBI:57457"/>
    </ligand>
</feature>
<feature type="binding site" evidence="1">
    <location>
        <position position="80"/>
    </location>
    <ligand>
        <name>(6S)-5-formyl-5,6,7,8-tetrahydrofolate</name>
        <dbReference type="ChEBI" id="CHEBI:57457"/>
    </ligand>
</feature>
<feature type="binding site" evidence="1">
    <location>
        <position position="120"/>
    </location>
    <ligand>
        <name>(6S)-5-formyl-5,6,7,8-tetrahydrofolate</name>
        <dbReference type="ChEBI" id="CHEBI:57457"/>
    </ligand>
</feature>
<feature type="binding site" evidence="1">
    <location>
        <begin position="226"/>
        <end position="231"/>
    </location>
    <ligand>
        <name>GTP</name>
        <dbReference type="ChEBI" id="CHEBI:37565"/>
    </ligand>
</feature>
<feature type="binding site" evidence="1">
    <location>
        <position position="226"/>
    </location>
    <ligand>
        <name>K(+)</name>
        <dbReference type="ChEBI" id="CHEBI:29103"/>
    </ligand>
</feature>
<feature type="binding site" evidence="1">
    <location>
        <position position="230"/>
    </location>
    <ligand>
        <name>Mg(2+)</name>
        <dbReference type="ChEBI" id="CHEBI:18420"/>
    </ligand>
</feature>
<feature type="binding site" evidence="1">
    <location>
        <begin position="245"/>
        <end position="251"/>
    </location>
    <ligand>
        <name>GTP</name>
        <dbReference type="ChEBI" id="CHEBI:37565"/>
    </ligand>
</feature>
<feature type="binding site" evidence="1">
    <location>
        <position position="245"/>
    </location>
    <ligand>
        <name>K(+)</name>
        <dbReference type="ChEBI" id="CHEBI:29103"/>
    </ligand>
</feature>
<feature type="binding site" evidence="1">
    <location>
        <position position="247"/>
    </location>
    <ligand>
        <name>K(+)</name>
        <dbReference type="ChEBI" id="CHEBI:29103"/>
    </ligand>
</feature>
<feature type="binding site" evidence="1">
    <location>
        <position position="250"/>
    </location>
    <ligand>
        <name>K(+)</name>
        <dbReference type="ChEBI" id="CHEBI:29103"/>
    </ligand>
</feature>
<feature type="binding site" evidence="1">
    <location>
        <position position="251"/>
    </location>
    <ligand>
        <name>Mg(2+)</name>
        <dbReference type="ChEBI" id="CHEBI:18420"/>
    </ligand>
</feature>
<feature type="binding site" evidence="1">
    <location>
        <begin position="270"/>
        <end position="273"/>
    </location>
    <ligand>
        <name>GTP</name>
        <dbReference type="ChEBI" id="CHEBI:37565"/>
    </ligand>
</feature>
<feature type="binding site" evidence="1">
    <location>
        <begin position="335"/>
        <end position="338"/>
    </location>
    <ligand>
        <name>GTP</name>
        <dbReference type="ChEBI" id="CHEBI:37565"/>
    </ligand>
</feature>
<feature type="binding site" evidence="1">
    <location>
        <begin position="358"/>
        <end position="360"/>
    </location>
    <ligand>
        <name>GTP</name>
        <dbReference type="ChEBI" id="CHEBI:37565"/>
    </ligand>
</feature>
<feature type="binding site" evidence="1">
    <location>
        <position position="454"/>
    </location>
    <ligand>
        <name>(6S)-5-formyl-5,6,7,8-tetrahydrofolate</name>
        <dbReference type="ChEBI" id="CHEBI:57457"/>
    </ligand>
</feature>
<reference key="1">
    <citation type="submission" date="2008-02" db="EMBL/GenBank/DDBJ databases">
        <title>Complete sequence of Escherichia coli C str. ATCC 8739.</title>
        <authorList>
            <person name="Copeland A."/>
            <person name="Lucas S."/>
            <person name="Lapidus A."/>
            <person name="Glavina del Rio T."/>
            <person name="Dalin E."/>
            <person name="Tice H."/>
            <person name="Bruce D."/>
            <person name="Goodwin L."/>
            <person name="Pitluck S."/>
            <person name="Kiss H."/>
            <person name="Brettin T."/>
            <person name="Detter J.C."/>
            <person name="Han C."/>
            <person name="Kuske C.R."/>
            <person name="Schmutz J."/>
            <person name="Larimer F."/>
            <person name="Land M."/>
            <person name="Hauser L."/>
            <person name="Kyrpides N."/>
            <person name="Mikhailova N."/>
            <person name="Ingram L."/>
            <person name="Richardson P."/>
        </authorList>
    </citation>
    <scope>NUCLEOTIDE SEQUENCE [LARGE SCALE GENOMIC DNA]</scope>
    <source>
        <strain>ATCC 8739 / DSM 1576 / NBRC 3972 / NCIMB 8545 / WDCM 00012 / Crooks</strain>
    </source>
</reference>
<name>MNME_ECOLC</name>
<proteinExistence type="inferred from homology"/>
<dbReference type="EC" id="3.6.-.-" evidence="1"/>
<dbReference type="EMBL" id="CP000946">
    <property type="protein sequence ID" value="ACA79884.1"/>
    <property type="molecule type" value="Genomic_DNA"/>
</dbReference>
<dbReference type="RefSeq" id="WP_001282346.1">
    <property type="nucleotide sequence ID" value="NZ_MTFT01000013.1"/>
</dbReference>
<dbReference type="BMRB" id="B1IX32"/>
<dbReference type="SMR" id="B1IX32"/>
<dbReference type="GeneID" id="86861818"/>
<dbReference type="KEGG" id="ecl:EcolC_4288"/>
<dbReference type="HOGENOM" id="CLU_019624_4_1_6"/>
<dbReference type="GO" id="GO:0005829">
    <property type="term" value="C:cytosol"/>
    <property type="evidence" value="ECO:0007669"/>
    <property type="project" value="TreeGrafter"/>
</dbReference>
<dbReference type="GO" id="GO:0005525">
    <property type="term" value="F:GTP binding"/>
    <property type="evidence" value="ECO:0007669"/>
    <property type="project" value="UniProtKB-UniRule"/>
</dbReference>
<dbReference type="GO" id="GO:0003924">
    <property type="term" value="F:GTPase activity"/>
    <property type="evidence" value="ECO:0007669"/>
    <property type="project" value="UniProtKB-UniRule"/>
</dbReference>
<dbReference type="GO" id="GO:0046872">
    <property type="term" value="F:metal ion binding"/>
    <property type="evidence" value="ECO:0007669"/>
    <property type="project" value="UniProtKB-KW"/>
</dbReference>
<dbReference type="GO" id="GO:0030488">
    <property type="term" value="P:tRNA methylation"/>
    <property type="evidence" value="ECO:0007669"/>
    <property type="project" value="TreeGrafter"/>
</dbReference>
<dbReference type="GO" id="GO:0002098">
    <property type="term" value="P:tRNA wobble uridine modification"/>
    <property type="evidence" value="ECO:0007669"/>
    <property type="project" value="TreeGrafter"/>
</dbReference>
<dbReference type="CDD" id="cd04164">
    <property type="entry name" value="trmE"/>
    <property type="match status" value="1"/>
</dbReference>
<dbReference type="CDD" id="cd14858">
    <property type="entry name" value="TrmE_N"/>
    <property type="match status" value="1"/>
</dbReference>
<dbReference type="FunFam" id="3.30.1360.120:FF:000001">
    <property type="entry name" value="tRNA modification GTPase MnmE"/>
    <property type="match status" value="1"/>
</dbReference>
<dbReference type="FunFam" id="3.40.50.300:FF:000249">
    <property type="entry name" value="tRNA modification GTPase MnmE"/>
    <property type="match status" value="1"/>
</dbReference>
<dbReference type="Gene3D" id="3.40.50.300">
    <property type="entry name" value="P-loop containing nucleotide triphosphate hydrolases"/>
    <property type="match status" value="1"/>
</dbReference>
<dbReference type="Gene3D" id="3.30.1360.120">
    <property type="entry name" value="Probable tRNA modification gtpase trme, domain 1"/>
    <property type="match status" value="1"/>
</dbReference>
<dbReference type="Gene3D" id="1.20.120.430">
    <property type="entry name" value="tRNA modification GTPase MnmE domain 2"/>
    <property type="match status" value="1"/>
</dbReference>
<dbReference type="HAMAP" id="MF_00379">
    <property type="entry name" value="GTPase_MnmE"/>
    <property type="match status" value="1"/>
</dbReference>
<dbReference type="InterPro" id="IPR031168">
    <property type="entry name" value="G_TrmE"/>
</dbReference>
<dbReference type="InterPro" id="IPR006073">
    <property type="entry name" value="GTP-bd"/>
</dbReference>
<dbReference type="InterPro" id="IPR018948">
    <property type="entry name" value="GTP-bd_TrmE_N"/>
</dbReference>
<dbReference type="InterPro" id="IPR004520">
    <property type="entry name" value="GTPase_MnmE"/>
</dbReference>
<dbReference type="InterPro" id="IPR027368">
    <property type="entry name" value="MnmE_dom2"/>
</dbReference>
<dbReference type="InterPro" id="IPR025867">
    <property type="entry name" value="MnmE_helical"/>
</dbReference>
<dbReference type="InterPro" id="IPR027417">
    <property type="entry name" value="P-loop_NTPase"/>
</dbReference>
<dbReference type="InterPro" id="IPR005225">
    <property type="entry name" value="Small_GTP-bd"/>
</dbReference>
<dbReference type="InterPro" id="IPR027266">
    <property type="entry name" value="TrmE/GcvT_dom1"/>
</dbReference>
<dbReference type="NCBIfam" id="TIGR00450">
    <property type="entry name" value="mnmE_trmE_thdF"/>
    <property type="match status" value="1"/>
</dbReference>
<dbReference type="NCBIfam" id="NF003661">
    <property type="entry name" value="PRK05291.1-3"/>
    <property type="match status" value="1"/>
</dbReference>
<dbReference type="NCBIfam" id="TIGR00231">
    <property type="entry name" value="small_GTP"/>
    <property type="match status" value="1"/>
</dbReference>
<dbReference type="PANTHER" id="PTHR42714">
    <property type="entry name" value="TRNA MODIFICATION GTPASE GTPBP3"/>
    <property type="match status" value="1"/>
</dbReference>
<dbReference type="PANTHER" id="PTHR42714:SF2">
    <property type="entry name" value="TRNA MODIFICATION GTPASE GTPBP3, MITOCHONDRIAL"/>
    <property type="match status" value="1"/>
</dbReference>
<dbReference type="Pfam" id="PF01926">
    <property type="entry name" value="MMR_HSR1"/>
    <property type="match status" value="1"/>
</dbReference>
<dbReference type="Pfam" id="PF12631">
    <property type="entry name" value="MnmE_helical"/>
    <property type="match status" value="1"/>
</dbReference>
<dbReference type="Pfam" id="PF10396">
    <property type="entry name" value="TrmE_N"/>
    <property type="match status" value="1"/>
</dbReference>
<dbReference type="SUPFAM" id="SSF52540">
    <property type="entry name" value="P-loop containing nucleoside triphosphate hydrolases"/>
    <property type="match status" value="1"/>
</dbReference>
<dbReference type="SUPFAM" id="SSF116878">
    <property type="entry name" value="TrmE connector domain"/>
    <property type="match status" value="1"/>
</dbReference>
<dbReference type="PROSITE" id="PS51709">
    <property type="entry name" value="G_TRME"/>
    <property type="match status" value="1"/>
</dbReference>
<protein>
    <recommendedName>
        <fullName evidence="1">tRNA modification GTPase MnmE</fullName>
        <ecNumber evidence="1">3.6.-.-</ecNumber>
    </recommendedName>
</protein>
<evidence type="ECO:0000255" key="1">
    <source>
        <dbReference type="HAMAP-Rule" id="MF_00379"/>
    </source>
</evidence>
<accession>B1IX32</accession>
<comment type="function">
    <text evidence="1">Exhibits a very high intrinsic GTPase hydrolysis rate. Involved in the addition of a carboxymethylaminomethyl (cmnm) group at the wobble position (U34) of certain tRNAs, forming tRNA-cmnm(5)s(2)U34.</text>
</comment>
<comment type="cofactor">
    <cofactor evidence="1">
        <name>K(+)</name>
        <dbReference type="ChEBI" id="CHEBI:29103"/>
    </cofactor>
    <text evidence="1">Binds 1 potassium ion per subunit.</text>
</comment>
<comment type="subunit">
    <text evidence="1">Homodimer. Heterotetramer of two MnmE and two MnmG subunits.</text>
</comment>
<comment type="subcellular location">
    <subcellularLocation>
        <location evidence="1">Cytoplasm</location>
    </subcellularLocation>
</comment>
<comment type="similarity">
    <text evidence="1">Belongs to the TRAFAC class TrmE-Era-EngA-EngB-Septin-like GTPase superfamily. TrmE GTPase family.</text>
</comment>
<keyword id="KW-0963">Cytoplasm</keyword>
<keyword id="KW-0342">GTP-binding</keyword>
<keyword id="KW-0378">Hydrolase</keyword>
<keyword id="KW-0460">Magnesium</keyword>
<keyword id="KW-0479">Metal-binding</keyword>
<keyword id="KW-0547">Nucleotide-binding</keyword>
<keyword id="KW-0630">Potassium</keyword>
<keyword id="KW-0819">tRNA processing</keyword>
<organism>
    <name type="scientific">Escherichia coli (strain ATCC 8739 / DSM 1576 / NBRC 3972 / NCIMB 8545 / WDCM 00012 / Crooks)</name>
    <dbReference type="NCBI Taxonomy" id="481805"/>
    <lineage>
        <taxon>Bacteria</taxon>
        <taxon>Pseudomonadati</taxon>
        <taxon>Pseudomonadota</taxon>
        <taxon>Gammaproteobacteria</taxon>
        <taxon>Enterobacterales</taxon>
        <taxon>Enterobacteriaceae</taxon>
        <taxon>Escherichia</taxon>
    </lineage>
</organism>